<name>RRF_MYCA9</name>
<protein>
    <recommendedName>
        <fullName evidence="1">Ribosome-recycling factor</fullName>
        <shortName evidence="1">RRF</shortName>
    </recommendedName>
    <alternativeName>
        <fullName evidence="1">Ribosome-releasing factor</fullName>
    </alternativeName>
</protein>
<accession>B1MDE3</accession>
<keyword id="KW-0963">Cytoplasm</keyword>
<keyword id="KW-0648">Protein biosynthesis</keyword>
<keyword id="KW-1185">Reference proteome</keyword>
<proteinExistence type="inferred from homology"/>
<gene>
    <name evidence="1" type="primary">frr</name>
    <name type="ordered locus">MAB_3187c</name>
</gene>
<reference key="1">
    <citation type="journal article" date="2009" name="PLoS ONE">
        <title>Non mycobacterial virulence genes in the genome of the emerging pathogen Mycobacterium abscessus.</title>
        <authorList>
            <person name="Ripoll F."/>
            <person name="Pasek S."/>
            <person name="Schenowitz C."/>
            <person name="Dossat C."/>
            <person name="Barbe V."/>
            <person name="Rottman M."/>
            <person name="Macheras E."/>
            <person name="Heym B."/>
            <person name="Herrmann J.L."/>
            <person name="Daffe M."/>
            <person name="Brosch R."/>
            <person name="Risler J.L."/>
            <person name="Gaillard J.L."/>
        </authorList>
    </citation>
    <scope>NUCLEOTIDE SEQUENCE [LARGE SCALE GENOMIC DNA]</scope>
    <source>
        <strain>ATCC 19977 / DSM 44196 / CCUG 20993 / CIP 104536 / JCM 13569 / NCTC 13031 / TMC 1543 / L948</strain>
    </source>
</reference>
<organism>
    <name type="scientific">Mycobacteroides abscessus (strain ATCC 19977 / DSM 44196 / CCUG 20993 / CIP 104536 / JCM 13569 / NCTC 13031 / TMC 1543 / L948)</name>
    <name type="common">Mycobacterium abscessus</name>
    <dbReference type="NCBI Taxonomy" id="561007"/>
    <lineage>
        <taxon>Bacteria</taxon>
        <taxon>Bacillati</taxon>
        <taxon>Actinomycetota</taxon>
        <taxon>Actinomycetes</taxon>
        <taxon>Mycobacteriales</taxon>
        <taxon>Mycobacteriaceae</taxon>
        <taxon>Mycobacteroides</taxon>
        <taxon>Mycobacteroides abscessus</taxon>
    </lineage>
</organism>
<sequence length="185" mass="20714">MIDEVLLDAEEKMEKAVTVARDDFATIRTGRANPGMFQRVVIDYYGTPTPITQVAGINVPEARMVVIKPYESNQLKAIEDAIRNSDLGLNPSNDGSIIRVAIPQLTEERRRELVKQAKGKGEDAKVTLRNIRRKANDELNRIKKDGEAGEDEVGRAEKDLDKTTAQYVSQIDELVKHKEGELLEV</sequence>
<feature type="chain" id="PRO_1000090760" description="Ribosome-recycling factor">
    <location>
        <begin position="1"/>
        <end position="185"/>
    </location>
</feature>
<comment type="function">
    <text evidence="1">Responsible for the release of ribosomes from messenger RNA at the termination of protein biosynthesis. May increase the efficiency of translation by recycling ribosomes from one round of translation to another.</text>
</comment>
<comment type="subcellular location">
    <subcellularLocation>
        <location evidence="1">Cytoplasm</location>
    </subcellularLocation>
</comment>
<comment type="similarity">
    <text evidence="1">Belongs to the RRF family.</text>
</comment>
<dbReference type="EMBL" id="CU458896">
    <property type="protein sequence ID" value="CAM63264.1"/>
    <property type="molecule type" value="Genomic_DNA"/>
</dbReference>
<dbReference type="RefSeq" id="WP_005081622.1">
    <property type="nucleotide sequence ID" value="NZ_MLCG01000003.1"/>
</dbReference>
<dbReference type="SMR" id="B1MDE3"/>
<dbReference type="GeneID" id="93380120"/>
<dbReference type="KEGG" id="mab:MAB_3187c"/>
<dbReference type="Proteomes" id="UP000007137">
    <property type="component" value="Chromosome"/>
</dbReference>
<dbReference type="GO" id="GO:0005737">
    <property type="term" value="C:cytoplasm"/>
    <property type="evidence" value="ECO:0007669"/>
    <property type="project" value="UniProtKB-SubCell"/>
</dbReference>
<dbReference type="GO" id="GO:0043023">
    <property type="term" value="F:ribosomal large subunit binding"/>
    <property type="evidence" value="ECO:0007669"/>
    <property type="project" value="TreeGrafter"/>
</dbReference>
<dbReference type="GO" id="GO:0006415">
    <property type="term" value="P:translational termination"/>
    <property type="evidence" value="ECO:0007669"/>
    <property type="project" value="UniProtKB-UniRule"/>
</dbReference>
<dbReference type="CDD" id="cd00520">
    <property type="entry name" value="RRF"/>
    <property type="match status" value="1"/>
</dbReference>
<dbReference type="FunFam" id="1.10.132.20:FF:000001">
    <property type="entry name" value="Ribosome-recycling factor"/>
    <property type="match status" value="1"/>
</dbReference>
<dbReference type="FunFam" id="3.30.1360.40:FF:000001">
    <property type="entry name" value="Ribosome-recycling factor"/>
    <property type="match status" value="1"/>
</dbReference>
<dbReference type="Gene3D" id="3.30.1360.40">
    <property type="match status" value="1"/>
</dbReference>
<dbReference type="Gene3D" id="1.10.132.20">
    <property type="entry name" value="Ribosome-recycling factor"/>
    <property type="match status" value="1"/>
</dbReference>
<dbReference type="HAMAP" id="MF_00040">
    <property type="entry name" value="RRF"/>
    <property type="match status" value="1"/>
</dbReference>
<dbReference type="InterPro" id="IPR002661">
    <property type="entry name" value="Ribosome_recyc_fac"/>
</dbReference>
<dbReference type="InterPro" id="IPR023584">
    <property type="entry name" value="Ribosome_recyc_fac_dom"/>
</dbReference>
<dbReference type="InterPro" id="IPR036191">
    <property type="entry name" value="RRF_sf"/>
</dbReference>
<dbReference type="NCBIfam" id="TIGR00496">
    <property type="entry name" value="frr"/>
    <property type="match status" value="1"/>
</dbReference>
<dbReference type="PANTHER" id="PTHR20982:SF3">
    <property type="entry name" value="MITOCHONDRIAL RIBOSOME RECYCLING FACTOR PSEUDO 1"/>
    <property type="match status" value="1"/>
</dbReference>
<dbReference type="PANTHER" id="PTHR20982">
    <property type="entry name" value="RIBOSOME RECYCLING FACTOR"/>
    <property type="match status" value="1"/>
</dbReference>
<dbReference type="Pfam" id="PF01765">
    <property type="entry name" value="RRF"/>
    <property type="match status" value="1"/>
</dbReference>
<dbReference type="SUPFAM" id="SSF55194">
    <property type="entry name" value="Ribosome recycling factor, RRF"/>
    <property type="match status" value="1"/>
</dbReference>
<evidence type="ECO:0000255" key="1">
    <source>
        <dbReference type="HAMAP-Rule" id="MF_00040"/>
    </source>
</evidence>